<keyword id="KW-0687">Ribonucleoprotein</keyword>
<keyword id="KW-0689">Ribosomal protein</keyword>
<organism>
    <name type="scientific">Shewanella baltica (strain OS185)</name>
    <dbReference type="NCBI Taxonomy" id="402882"/>
    <lineage>
        <taxon>Bacteria</taxon>
        <taxon>Pseudomonadati</taxon>
        <taxon>Pseudomonadota</taxon>
        <taxon>Gammaproteobacteria</taxon>
        <taxon>Alteromonadales</taxon>
        <taxon>Shewanellaceae</taxon>
        <taxon>Shewanella</taxon>
    </lineage>
</organism>
<feature type="chain" id="PRO_1000049739" description="Large ribosomal subunit protein bL19">
    <location>
        <begin position="1"/>
        <end position="117"/>
    </location>
</feature>
<name>RL19_SHEB8</name>
<accession>A6WKR9</accession>
<evidence type="ECO:0000255" key="1">
    <source>
        <dbReference type="HAMAP-Rule" id="MF_00402"/>
    </source>
</evidence>
<evidence type="ECO:0000305" key="2"/>
<dbReference type="EMBL" id="CP000753">
    <property type="protein sequence ID" value="ABS07408.1"/>
    <property type="molecule type" value="Genomic_DNA"/>
</dbReference>
<dbReference type="RefSeq" id="WP_006080791.1">
    <property type="nucleotide sequence ID" value="NC_009665.1"/>
</dbReference>
<dbReference type="SMR" id="A6WKR9"/>
<dbReference type="GeneID" id="94728937"/>
<dbReference type="KEGG" id="sbm:Shew185_1257"/>
<dbReference type="HOGENOM" id="CLU_103507_2_2_6"/>
<dbReference type="GO" id="GO:0022625">
    <property type="term" value="C:cytosolic large ribosomal subunit"/>
    <property type="evidence" value="ECO:0007669"/>
    <property type="project" value="TreeGrafter"/>
</dbReference>
<dbReference type="GO" id="GO:0003735">
    <property type="term" value="F:structural constituent of ribosome"/>
    <property type="evidence" value="ECO:0007669"/>
    <property type="project" value="InterPro"/>
</dbReference>
<dbReference type="GO" id="GO:0006412">
    <property type="term" value="P:translation"/>
    <property type="evidence" value="ECO:0007669"/>
    <property type="project" value="UniProtKB-UniRule"/>
</dbReference>
<dbReference type="FunFam" id="2.30.30.790:FF:000001">
    <property type="entry name" value="50S ribosomal protein L19"/>
    <property type="match status" value="1"/>
</dbReference>
<dbReference type="Gene3D" id="2.30.30.790">
    <property type="match status" value="1"/>
</dbReference>
<dbReference type="HAMAP" id="MF_00402">
    <property type="entry name" value="Ribosomal_bL19"/>
    <property type="match status" value="1"/>
</dbReference>
<dbReference type="InterPro" id="IPR001857">
    <property type="entry name" value="Ribosomal_bL19"/>
</dbReference>
<dbReference type="InterPro" id="IPR018257">
    <property type="entry name" value="Ribosomal_bL19_CS"/>
</dbReference>
<dbReference type="InterPro" id="IPR038657">
    <property type="entry name" value="Ribosomal_bL19_sf"/>
</dbReference>
<dbReference type="InterPro" id="IPR008991">
    <property type="entry name" value="Translation_prot_SH3-like_sf"/>
</dbReference>
<dbReference type="NCBIfam" id="TIGR01024">
    <property type="entry name" value="rplS_bact"/>
    <property type="match status" value="1"/>
</dbReference>
<dbReference type="PANTHER" id="PTHR15680:SF9">
    <property type="entry name" value="LARGE RIBOSOMAL SUBUNIT PROTEIN BL19M"/>
    <property type="match status" value="1"/>
</dbReference>
<dbReference type="PANTHER" id="PTHR15680">
    <property type="entry name" value="RIBOSOMAL PROTEIN L19"/>
    <property type="match status" value="1"/>
</dbReference>
<dbReference type="Pfam" id="PF01245">
    <property type="entry name" value="Ribosomal_L19"/>
    <property type="match status" value="1"/>
</dbReference>
<dbReference type="PIRSF" id="PIRSF002191">
    <property type="entry name" value="Ribosomal_L19"/>
    <property type="match status" value="1"/>
</dbReference>
<dbReference type="PRINTS" id="PR00061">
    <property type="entry name" value="RIBOSOMALL19"/>
</dbReference>
<dbReference type="SUPFAM" id="SSF50104">
    <property type="entry name" value="Translation proteins SH3-like domain"/>
    <property type="match status" value="1"/>
</dbReference>
<dbReference type="PROSITE" id="PS01015">
    <property type="entry name" value="RIBOSOMAL_L19"/>
    <property type="match status" value="1"/>
</dbReference>
<comment type="function">
    <text evidence="1">This protein is located at the 30S-50S ribosomal subunit interface and may play a role in the structure and function of the aminoacyl-tRNA binding site.</text>
</comment>
<comment type="similarity">
    <text evidence="1">Belongs to the bacterial ribosomal protein bL19 family.</text>
</comment>
<proteinExistence type="inferred from homology"/>
<sequence length="117" mass="13292">MNNIIKMLNDEQMKQDVPAFGAGDTVVVQVRVKEGDKERLQAFEGVVIAKRNRGLHSAFTVRKISNGEGVERAFQTHSPLIASIEVKRRGRVRRAKLYYLRDRSGKSARIREKLATK</sequence>
<protein>
    <recommendedName>
        <fullName evidence="1">Large ribosomal subunit protein bL19</fullName>
    </recommendedName>
    <alternativeName>
        <fullName evidence="2">50S ribosomal protein L19</fullName>
    </alternativeName>
</protein>
<gene>
    <name evidence="1" type="primary">rplS</name>
    <name type="ordered locus">Shew185_1257</name>
</gene>
<reference key="1">
    <citation type="submission" date="2007-07" db="EMBL/GenBank/DDBJ databases">
        <title>Complete sequence of chromosome of Shewanella baltica OS185.</title>
        <authorList>
            <consortium name="US DOE Joint Genome Institute"/>
            <person name="Copeland A."/>
            <person name="Lucas S."/>
            <person name="Lapidus A."/>
            <person name="Barry K."/>
            <person name="Glavina del Rio T."/>
            <person name="Dalin E."/>
            <person name="Tice H."/>
            <person name="Pitluck S."/>
            <person name="Sims D."/>
            <person name="Brettin T."/>
            <person name="Bruce D."/>
            <person name="Detter J.C."/>
            <person name="Han C."/>
            <person name="Schmutz J."/>
            <person name="Larimer F."/>
            <person name="Land M."/>
            <person name="Hauser L."/>
            <person name="Kyrpides N."/>
            <person name="Mikhailova N."/>
            <person name="Brettar I."/>
            <person name="Rodrigues J."/>
            <person name="Konstantinidis K."/>
            <person name="Tiedje J."/>
            <person name="Richardson P."/>
        </authorList>
    </citation>
    <scope>NUCLEOTIDE SEQUENCE [LARGE SCALE GENOMIC DNA]</scope>
    <source>
        <strain>OS185</strain>
    </source>
</reference>